<organism>
    <name type="scientific">Arabidopsis thaliana</name>
    <name type="common">Mouse-ear cress</name>
    <dbReference type="NCBI Taxonomy" id="3702"/>
    <lineage>
        <taxon>Eukaryota</taxon>
        <taxon>Viridiplantae</taxon>
        <taxon>Streptophyta</taxon>
        <taxon>Embryophyta</taxon>
        <taxon>Tracheophyta</taxon>
        <taxon>Spermatophyta</taxon>
        <taxon>Magnoliopsida</taxon>
        <taxon>eudicotyledons</taxon>
        <taxon>Gunneridae</taxon>
        <taxon>Pentapetalae</taxon>
        <taxon>rosids</taxon>
        <taxon>malvids</taxon>
        <taxon>Brassicales</taxon>
        <taxon>Brassicaceae</taxon>
        <taxon>Camelineae</taxon>
        <taxon>Arabidopsis</taxon>
    </lineage>
</organism>
<feature type="chain" id="PRO_0000436713" description="Protein PHOSPHATE STARVATION RESPONSE 1">
    <location>
        <begin position="1"/>
        <end position="409"/>
    </location>
</feature>
<feature type="domain" description="HTH myb-type" evidence="2">
    <location>
        <begin position="222"/>
        <end position="282"/>
    </location>
</feature>
<feature type="DNA-binding region" description="H-T-H motif" evidence="2">
    <location>
        <begin position="253"/>
        <end position="278"/>
    </location>
</feature>
<feature type="region of interest" description="Disordered" evidence="3">
    <location>
        <begin position="1"/>
        <end position="42"/>
    </location>
</feature>
<feature type="region of interest" description="Disordered" evidence="3">
    <location>
        <begin position="86"/>
        <end position="108"/>
    </location>
</feature>
<feature type="region of interest" description="Disordered" evidence="3">
    <location>
        <begin position="178"/>
        <end position="226"/>
    </location>
</feature>
<feature type="region of interest" description="Disordered" evidence="3">
    <location>
        <begin position="358"/>
        <end position="409"/>
    </location>
</feature>
<feature type="coiled-coil region" evidence="1">
    <location>
        <begin position="314"/>
        <end position="334"/>
    </location>
</feature>
<feature type="short sequence motif" description="LHEQLE" evidence="18">
    <location>
        <begin position="327"/>
        <end position="332"/>
    </location>
</feature>
<feature type="compositionally biased region" description="Basic and acidic residues" evidence="3">
    <location>
        <begin position="1"/>
        <end position="15"/>
    </location>
</feature>
<feature type="compositionally biased region" description="Polar residues" evidence="3">
    <location>
        <begin position="16"/>
        <end position="26"/>
    </location>
</feature>
<feature type="compositionally biased region" description="Polar residues" evidence="3">
    <location>
        <begin position="90"/>
        <end position="108"/>
    </location>
</feature>
<feature type="compositionally biased region" description="Low complexity" evidence="3">
    <location>
        <begin position="192"/>
        <end position="224"/>
    </location>
</feature>
<feature type="compositionally biased region" description="Polar residues" evidence="3">
    <location>
        <begin position="358"/>
        <end position="370"/>
    </location>
</feature>
<feature type="compositionally biased region" description="Basic and acidic residues" evidence="3">
    <location>
        <begin position="371"/>
        <end position="396"/>
    </location>
</feature>
<feature type="modified residue" description="Phosphoserine" evidence="21">
    <location>
        <position position="399"/>
    </location>
</feature>
<feature type="helix" evidence="22">
    <location>
        <begin position="232"/>
        <end position="244"/>
    </location>
</feature>
<feature type="turn" evidence="22">
    <location>
        <begin position="248"/>
        <end position="250"/>
    </location>
</feature>
<feature type="helix" evidence="22">
    <location>
        <begin position="253"/>
        <end position="260"/>
    </location>
</feature>
<feature type="helix" evidence="22">
    <location>
        <begin position="267"/>
        <end position="279"/>
    </location>
</feature>
<proteinExistence type="evidence at protein level"/>
<accession>Q94CL7</accession>
<accession>Q9M0H0</accession>
<keyword id="KW-0002">3D-structure</keyword>
<keyword id="KW-0175">Coiled coil</keyword>
<keyword id="KW-0238">DNA-binding</keyword>
<keyword id="KW-0539">Nucleus</keyword>
<keyword id="KW-0597">Phosphoprotein</keyword>
<keyword id="KW-1185">Reference proteome</keyword>
<keyword id="KW-0804">Transcription</keyword>
<keyword id="KW-0805">Transcription regulation</keyword>
<keyword id="KW-0832">Ubl conjugation</keyword>
<name>PHR1_ARATH</name>
<gene>
    <name evidence="17" type="primary">PHR1</name>
    <name evidence="19" type="ordered locus">At4g28610</name>
    <name evidence="20" type="ORF">T5F17.60</name>
</gene>
<dbReference type="EMBL" id="AJ310799">
    <property type="protein sequence ID" value="CAC59689.1"/>
    <property type="molecule type" value="mRNA"/>
</dbReference>
<dbReference type="EMBL" id="AL161573">
    <property type="protein sequence ID" value="CAB81449.1"/>
    <property type="status" value="ALT_SEQ"/>
    <property type="molecule type" value="Genomic_DNA"/>
</dbReference>
<dbReference type="EMBL" id="CP002687">
    <property type="protein sequence ID" value="AEE85512.1"/>
    <property type="molecule type" value="Genomic_DNA"/>
</dbReference>
<dbReference type="EMBL" id="AY081290">
    <property type="protein sequence ID" value="AAL91179.1"/>
    <property type="molecule type" value="mRNA"/>
</dbReference>
<dbReference type="EMBL" id="BT002187">
    <property type="protein sequence ID" value="AAN72198.1"/>
    <property type="molecule type" value="mRNA"/>
</dbReference>
<dbReference type="PIR" id="T10655">
    <property type="entry name" value="T10655"/>
</dbReference>
<dbReference type="RefSeq" id="NP_194590.2">
    <property type="nucleotide sequence ID" value="NM_119003.4"/>
</dbReference>
<dbReference type="PDB" id="6J4K">
    <property type="method" value="X-ray"/>
    <property type="resolution" value="1.58 A"/>
    <property type="chains" value="A/B=224-283"/>
</dbReference>
<dbReference type="PDB" id="6J4R">
    <property type="method" value="X-ray"/>
    <property type="resolution" value="2.80 A"/>
    <property type="chains" value="A/B/C/D=225-282"/>
</dbReference>
<dbReference type="PDB" id="6J5B">
    <property type="method" value="X-ray"/>
    <property type="resolution" value="2.70 A"/>
    <property type="chains" value="A/C/D/F/H/J=224-283"/>
</dbReference>
<dbReference type="PDB" id="6TO5">
    <property type="method" value="X-ray"/>
    <property type="resolution" value="2.38 A"/>
    <property type="chains" value="AAAA/AAAB=280-359"/>
</dbReference>
<dbReference type="PDB" id="6TO9">
    <property type="method" value="X-ray"/>
    <property type="resolution" value="2.45 A"/>
    <property type="chains" value="AAAA/AAAB=280-359"/>
</dbReference>
<dbReference type="PDB" id="6TOC">
    <property type="method" value="X-ray"/>
    <property type="resolution" value="1.85 A"/>
    <property type="chains" value="AAA/BBB=280-359"/>
</dbReference>
<dbReference type="PDBsum" id="6J4K"/>
<dbReference type="PDBsum" id="6J4R"/>
<dbReference type="PDBsum" id="6J5B"/>
<dbReference type="PDBsum" id="6TO5"/>
<dbReference type="PDBsum" id="6TO9"/>
<dbReference type="PDBsum" id="6TOC"/>
<dbReference type="SMR" id="Q94CL7"/>
<dbReference type="FunCoup" id="Q94CL7">
    <property type="interactions" value="698"/>
</dbReference>
<dbReference type="STRING" id="3702.Q94CL7"/>
<dbReference type="iPTMnet" id="Q94CL7"/>
<dbReference type="PaxDb" id="3702-AT4G28610.1"/>
<dbReference type="ProteomicsDB" id="234721"/>
<dbReference type="EnsemblPlants" id="AT4G28610.1">
    <property type="protein sequence ID" value="AT4G28610.1"/>
    <property type="gene ID" value="AT4G28610"/>
</dbReference>
<dbReference type="GeneID" id="828979"/>
<dbReference type="Gramene" id="AT4G28610.1">
    <property type="protein sequence ID" value="AT4G28610.1"/>
    <property type="gene ID" value="AT4G28610"/>
</dbReference>
<dbReference type="KEGG" id="ath:AT4G28610"/>
<dbReference type="Araport" id="AT4G28610"/>
<dbReference type="TAIR" id="AT4G28610">
    <property type="gene designation" value="PHR1"/>
</dbReference>
<dbReference type="eggNOG" id="ENOG502QXMH">
    <property type="taxonomic scope" value="Eukaryota"/>
</dbReference>
<dbReference type="HOGENOM" id="CLU_044541_2_1_1"/>
<dbReference type="InParanoid" id="Q94CL7"/>
<dbReference type="OMA" id="PHEKHSR"/>
<dbReference type="PhylomeDB" id="Q94CL7"/>
<dbReference type="PRO" id="PR:Q94CL7"/>
<dbReference type="Proteomes" id="UP000006548">
    <property type="component" value="Chromosome 4"/>
</dbReference>
<dbReference type="ExpressionAtlas" id="Q94CL7">
    <property type="expression patterns" value="baseline and differential"/>
</dbReference>
<dbReference type="GO" id="GO:0005634">
    <property type="term" value="C:nucleus"/>
    <property type="evidence" value="ECO:0000314"/>
    <property type="project" value="TAIR"/>
</dbReference>
<dbReference type="GO" id="GO:0003677">
    <property type="term" value="F:DNA binding"/>
    <property type="evidence" value="ECO:0007669"/>
    <property type="project" value="UniProtKB-KW"/>
</dbReference>
<dbReference type="GO" id="GO:0003700">
    <property type="term" value="F:DNA-binding transcription factor activity"/>
    <property type="evidence" value="ECO:0000250"/>
    <property type="project" value="TAIR"/>
</dbReference>
<dbReference type="GO" id="GO:0071486">
    <property type="term" value="P:cellular response to high light intensity"/>
    <property type="evidence" value="ECO:0000315"/>
    <property type="project" value="TAIR"/>
</dbReference>
<dbReference type="GO" id="GO:0016036">
    <property type="term" value="P:cellular response to phosphate starvation"/>
    <property type="evidence" value="ECO:0000315"/>
    <property type="project" value="TAIR"/>
</dbReference>
<dbReference type="GO" id="GO:0007623">
    <property type="term" value="P:circadian rhythm"/>
    <property type="evidence" value="ECO:0000270"/>
    <property type="project" value="TAIR"/>
</dbReference>
<dbReference type="GO" id="GO:0006355">
    <property type="term" value="P:regulation of DNA-templated transcription"/>
    <property type="evidence" value="ECO:0000304"/>
    <property type="project" value="TAIR"/>
</dbReference>
<dbReference type="GO" id="GO:0034765">
    <property type="term" value="P:regulation of monoatomic ion transmembrane transport"/>
    <property type="evidence" value="ECO:0000315"/>
    <property type="project" value="TAIR"/>
</dbReference>
<dbReference type="GO" id="GO:1903842">
    <property type="term" value="P:response to arsenite ion"/>
    <property type="evidence" value="ECO:0000315"/>
    <property type="project" value="TAIR"/>
</dbReference>
<dbReference type="GO" id="GO:0055063">
    <property type="term" value="P:sulfate ion homeostasis"/>
    <property type="evidence" value="ECO:0000315"/>
    <property type="project" value="TAIR"/>
</dbReference>
<dbReference type="FunFam" id="1.10.10.60:FF:000002">
    <property type="entry name" value="Myb family transcription factor"/>
    <property type="match status" value="1"/>
</dbReference>
<dbReference type="Gene3D" id="1.10.10.60">
    <property type="entry name" value="Homeodomain-like"/>
    <property type="match status" value="1"/>
</dbReference>
<dbReference type="InterPro" id="IPR009057">
    <property type="entry name" value="Homeodomain-like_sf"/>
</dbReference>
<dbReference type="InterPro" id="IPR025756">
    <property type="entry name" value="Myb_CC_LHEQLE"/>
</dbReference>
<dbReference type="InterPro" id="IPR017930">
    <property type="entry name" value="Myb_dom"/>
</dbReference>
<dbReference type="InterPro" id="IPR006447">
    <property type="entry name" value="Myb_dom_plants"/>
</dbReference>
<dbReference type="InterPro" id="IPR046955">
    <property type="entry name" value="PHR1-like"/>
</dbReference>
<dbReference type="InterPro" id="IPR001005">
    <property type="entry name" value="SANT/Myb"/>
</dbReference>
<dbReference type="NCBIfam" id="TIGR01557">
    <property type="entry name" value="myb_SHAQKYF"/>
    <property type="match status" value="1"/>
</dbReference>
<dbReference type="PANTHER" id="PTHR31499:SF80">
    <property type="entry name" value="HTH MYB-TYPE DOMAIN-CONTAINING PROTEIN"/>
    <property type="match status" value="1"/>
</dbReference>
<dbReference type="PANTHER" id="PTHR31499">
    <property type="entry name" value="MYB FAMILY TRANSCRIPTION FACTOR PHL11"/>
    <property type="match status" value="1"/>
</dbReference>
<dbReference type="Pfam" id="PF14379">
    <property type="entry name" value="Myb_CC_LHEQLE"/>
    <property type="match status" value="1"/>
</dbReference>
<dbReference type="Pfam" id="PF00249">
    <property type="entry name" value="Myb_DNA-binding"/>
    <property type="match status" value="1"/>
</dbReference>
<dbReference type="SUPFAM" id="SSF46689">
    <property type="entry name" value="Homeodomain-like"/>
    <property type="match status" value="1"/>
</dbReference>
<dbReference type="PROSITE" id="PS51294">
    <property type="entry name" value="HTH_MYB"/>
    <property type="match status" value="1"/>
</dbReference>
<comment type="function">
    <text evidence="4 6 7 8 9 10 11 12 13 14 15 16">Transcription factor involved in phosphate starvation signaling (PubMed:11511543, PubMed:17927693, PubMed:26586833). Binds as a dimer to P1BS, an imperfect palindromic sequence 5'-GNATATNC-3', to promote the expression of inorganic phosphate (Pi) starvation-responsive genes (PubMed:11511543, PubMed:20838596, PubMed:26586833). SPX1 is a competitive inhibitor of this DNA-binding (PubMed:25271326). PHR1 binding to its targets is low Pi-dependent (PubMed:25271326). Regulates the expression of miR399 (PubMed:20838596). Regulates the expression of IPS1 (At3g09922), a non-coding RNA that mimics the target of miR399 to block the cleavage of PHO2 under Pi-deficient conditions (PubMed:17643101). Regulates lipid remodeling and triacylglycerol accumulation during phosphorus starvation (PubMed:25680792). Required for the shoot-specific hypoxic response (PubMed:24753539). Regulates FER1 expression upon phosphate starvation, linking iron and phosphate homeostasis (PubMed:23788639). Contributes to the homeostasis of both sulfate and phosphate in plants under phosphate deficiency (PubMed:21261953). Required for adaptation to high light and retaining functional photosynthesis during phosphate starvation (PubMed:21910737). Involved in the coregulation of Zn and Pi homeostasis (PubMed:24420568).</text>
</comment>
<comment type="subunit">
    <text evidence="4 14 16">Homodimers and heterodimers (PubMed:11511543, PubMed:20838596). Interacts with SPX1 in a Pi-dependent manner (PubMed:25271326). Does not interact with PHL2 or PHL3 (PubMed:26586833).</text>
</comment>
<comment type="subcellular location">
    <subcellularLocation>
        <location evidence="4">Nucleus</location>
    </subcellularLocation>
    <text evidence="4">The localization to the nucleus is independent of the Pi status.</text>
</comment>
<comment type="induction">
    <text evidence="4">Only moderately up-regulated by Pi starvation.</text>
</comment>
<comment type="PTM">
    <text evidence="5">Sumoylated by SIZ1. Sumoylation controls phosphate deficiency responses.</text>
</comment>
<comment type="disruption phenotype">
    <text evidence="7">Strongly reduced shoot growth, and slightly increased root growth. Reduced expression of phosphate starvation-induced (PSI) genes, decreased cellular inorganic phosphate (Pi) content and shoot-to-root ratio, and impaired anthocyanin accumulation (PubMed:17927693).</text>
</comment>
<comment type="similarity">
    <text evidence="18">Belongs to the MYB-CC family.</text>
</comment>
<comment type="sequence caution" evidence="18">
    <conflict type="erroneous gene model prediction">
        <sequence resource="EMBL-CDS" id="CAB81449"/>
    </conflict>
</comment>
<reference key="1">
    <citation type="journal article" date="2001" name="Genes Dev.">
        <title>A conserved MYB transcription factor involved in phosphate starvation signaling both in vascular plants and in unicellular algae.</title>
        <authorList>
            <person name="Rubio V."/>
            <person name="Linhares F."/>
            <person name="Solano R."/>
            <person name="Martin A.C."/>
            <person name="Iglesias J."/>
            <person name="Leyva A."/>
            <person name="Paz-Ares J."/>
        </authorList>
    </citation>
    <scope>NUCLEOTIDE SEQUENCE [MRNA]</scope>
    <scope>FUNCTION</scope>
    <scope>SUBUNIT</scope>
    <scope>INDUCTION BY PHOSPHATE</scope>
    <scope>GENE FAMILY</scope>
    <scope>SUBCELLULAR LOCATION</scope>
</reference>
<reference key="2">
    <citation type="journal article" date="1999" name="Nature">
        <title>Sequence and analysis of chromosome 4 of the plant Arabidopsis thaliana.</title>
        <authorList>
            <person name="Mayer K.F.X."/>
            <person name="Schueller C."/>
            <person name="Wambutt R."/>
            <person name="Murphy G."/>
            <person name="Volckaert G."/>
            <person name="Pohl T."/>
            <person name="Duesterhoeft A."/>
            <person name="Stiekema W."/>
            <person name="Entian K.-D."/>
            <person name="Terryn N."/>
            <person name="Harris B."/>
            <person name="Ansorge W."/>
            <person name="Brandt P."/>
            <person name="Grivell L.A."/>
            <person name="Rieger M."/>
            <person name="Weichselgartner M."/>
            <person name="de Simone V."/>
            <person name="Obermaier B."/>
            <person name="Mache R."/>
            <person name="Mueller M."/>
            <person name="Kreis M."/>
            <person name="Delseny M."/>
            <person name="Puigdomenech P."/>
            <person name="Watson M."/>
            <person name="Schmidtheini T."/>
            <person name="Reichert B."/>
            <person name="Portetelle D."/>
            <person name="Perez-Alonso M."/>
            <person name="Boutry M."/>
            <person name="Bancroft I."/>
            <person name="Vos P."/>
            <person name="Hoheisel J."/>
            <person name="Zimmermann W."/>
            <person name="Wedler H."/>
            <person name="Ridley P."/>
            <person name="Langham S.-A."/>
            <person name="McCullagh B."/>
            <person name="Bilham L."/>
            <person name="Robben J."/>
            <person name="van der Schueren J."/>
            <person name="Grymonprez B."/>
            <person name="Chuang Y.-J."/>
            <person name="Vandenbussche F."/>
            <person name="Braeken M."/>
            <person name="Weltjens I."/>
            <person name="Voet M."/>
            <person name="Bastiaens I."/>
            <person name="Aert R."/>
            <person name="Defoor E."/>
            <person name="Weitzenegger T."/>
            <person name="Bothe G."/>
            <person name="Ramsperger U."/>
            <person name="Hilbert H."/>
            <person name="Braun M."/>
            <person name="Holzer E."/>
            <person name="Brandt A."/>
            <person name="Peters S."/>
            <person name="van Staveren M."/>
            <person name="Dirkse W."/>
            <person name="Mooijman P."/>
            <person name="Klein Lankhorst R."/>
            <person name="Rose M."/>
            <person name="Hauf J."/>
            <person name="Koetter P."/>
            <person name="Berneiser S."/>
            <person name="Hempel S."/>
            <person name="Feldpausch M."/>
            <person name="Lamberth S."/>
            <person name="Van den Daele H."/>
            <person name="De Keyser A."/>
            <person name="Buysshaert C."/>
            <person name="Gielen J."/>
            <person name="Villarroel R."/>
            <person name="De Clercq R."/>
            <person name="van Montagu M."/>
            <person name="Rogers J."/>
            <person name="Cronin A."/>
            <person name="Quail M.A."/>
            <person name="Bray-Allen S."/>
            <person name="Clark L."/>
            <person name="Doggett J."/>
            <person name="Hall S."/>
            <person name="Kay M."/>
            <person name="Lennard N."/>
            <person name="McLay K."/>
            <person name="Mayes R."/>
            <person name="Pettett A."/>
            <person name="Rajandream M.A."/>
            <person name="Lyne M."/>
            <person name="Benes V."/>
            <person name="Rechmann S."/>
            <person name="Borkova D."/>
            <person name="Bloecker H."/>
            <person name="Scharfe M."/>
            <person name="Grimm M."/>
            <person name="Loehnert T.-H."/>
            <person name="Dose S."/>
            <person name="de Haan M."/>
            <person name="Maarse A.C."/>
            <person name="Schaefer M."/>
            <person name="Mueller-Auer S."/>
            <person name="Gabel C."/>
            <person name="Fuchs M."/>
            <person name="Fartmann B."/>
            <person name="Granderath K."/>
            <person name="Dauner D."/>
            <person name="Herzl A."/>
            <person name="Neumann S."/>
            <person name="Argiriou A."/>
            <person name="Vitale D."/>
            <person name="Liguori R."/>
            <person name="Piravandi E."/>
            <person name="Massenet O."/>
            <person name="Quigley F."/>
            <person name="Clabauld G."/>
            <person name="Muendlein A."/>
            <person name="Felber R."/>
            <person name="Schnabl S."/>
            <person name="Hiller R."/>
            <person name="Schmidt W."/>
            <person name="Lecharny A."/>
            <person name="Aubourg S."/>
            <person name="Chefdor F."/>
            <person name="Cooke R."/>
            <person name="Berger C."/>
            <person name="Monfort A."/>
            <person name="Casacuberta E."/>
            <person name="Gibbons T."/>
            <person name="Weber N."/>
            <person name="Vandenbol M."/>
            <person name="Bargues M."/>
            <person name="Terol J."/>
            <person name="Torres A."/>
            <person name="Perez-Perez A."/>
            <person name="Purnelle B."/>
            <person name="Bent E."/>
            <person name="Johnson S."/>
            <person name="Tacon D."/>
            <person name="Jesse T."/>
            <person name="Heijnen L."/>
            <person name="Schwarz S."/>
            <person name="Scholler P."/>
            <person name="Heber S."/>
            <person name="Francs P."/>
            <person name="Bielke C."/>
            <person name="Frishman D."/>
            <person name="Haase D."/>
            <person name="Lemcke K."/>
            <person name="Mewes H.-W."/>
            <person name="Stocker S."/>
            <person name="Zaccaria P."/>
            <person name="Bevan M."/>
            <person name="Wilson R.K."/>
            <person name="de la Bastide M."/>
            <person name="Habermann K."/>
            <person name="Parnell L."/>
            <person name="Dedhia N."/>
            <person name="Gnoj L."/>
            <person name="Schutz K."/>
            <person name="Huang E."/>
            <person name="Spiegel L."/>
            <person name="Sekhon M."/>
            <person name="Murray J."/>
            <person name="Sheet P."/>
            <person name="Cordes M."/>
            <person name="Abu-Threideh J."/>
            <person name="Stoneking T."/>
            <person name="Kalicki J."/>
            <person name="Graves T."/>
            <person name="Harmon G."/>
            <person name="Edwards J."/>
            <person name="Latreille P."/>
            <person name="Courtney L."/>
            <person name="Cloud J."/>
            <person name="Abbott A."/>
            <person name="Scott K."/>
            <person name="Johnson D."/>
            <person name="Minx P."/>
            <person name="Bentley D."/>
            <person name="Fulton B."/>
            <person name="Miller N."/>
            <person name="Greco T."/>
            <person name="Kemp K."/>
            <person name="Kramer J."/>
            <person name="Fulton L."/>
            <person name="Mardis E."/>
            <person name="Dante M."/>
            <person name="Pepin K."/>
            <person name="Hillier L.W."/>
            <person name="Nelson J."/>
            <person name="Spieth J."/>
            <person name="Ryan E."/>
            <person name="Andrews S."/>
            <person name="Geisel C."/>
            <person name="Layman D."/>
            <person name="Du H."/>
            <person name="Ali J."/>
            <person name="Berghoff A."/>
            <person name="Jones K."/>
            <person name="Drone K."/>
            <person name="Cotton M."/>
            <person name="Joshu C."/>
            <person name="Antonoiu B."/>
            <person name="Zidanic M."/>
            <person name="Strong C."/>
            <person name="Sun H."/>
            <person name="Lamar B."/>
            <person name="Yordan C."/>
            <person name="Ma P."/>
            <person name="Zhong J."/>
            <person name="Preston R."/>
            <person name="Vil D."/>
            <person name="Shekher M."/>
            <person name="Matero A."/>
            <person name="Shah R."/>
            <person name="Swaby I.K."/>
            <person name="O'Shaughnessy A."/>
            <person name="Rodriguez M."/>
            <person name="Hoffman J."/>
            <person name="Till S."/>
            <person name="Granat S."/>
            <person name="Shohdy N."/>
            <person name="Hasegawa A."/>
            <person name="Hameed A."/>
            <person name="Lodhi M."/>
            <person name="Johnson A."/>
            <person name="Chen E."/>
            <person name="Marra M.A."/>
            <person name="Martienssen R."/>
            <person name="McCombie W.R."/>
        </authorList>
    </citation>
    <scope>NUCLEOTIDE SEQUENCE [LARGE SCALE GENOMIC DNA]</scope>
    <source>
        <strain>cv. Columbia</strain>
    </source>
</reference>
<reference key="3">
    <citation type="journal article" date="2017" name="Plant J.">
        <title>Araport11: a complete reannotation of the Arabidopsis thaliana reference genome.</title>
        <authorList>
            <person name="Cheng C.Y."/>
            <person name="Krishnakumar V."/>
            <person name="Chan A.P."/>
            <person name="Thibaud-Nissen F."/>
            <person name="Schobel S."/>
            <person name="Town C.D."/>
        </authorList>
    </citation>
    <scope>GENOME REANNOTATION</scope>
    <source>
        <strain>cv. Columbia</strain>
    </source>
</reference>
<reference key="4">
    <citation type="journal article" date="2003" name="Science">
        <title>Empirical analysis of transcriptional activity in the Arabidopsis genome.</title>
        <authorList>
            <person name="Yamada K."/>
            <person name="Lim J."/>
            <person name="Dale J.M."/>
            <person name="Chen H."/>
            <person name="Shinn P."/>
            <person name="Palm C.J."/>
            <person name="Southwick A.M."/>
            <person name="Wu H.C."/>
            <person name="Kim C.J."/>
            <person name="Nguyen M."/>
            <person name="Pham P.K."/>
            <person name="Cheuk R.F."/>
            <person name="Karlin-Newmann G."/>
            <person name="Liu S.X."/>
            <person name="Lam B."/>
            <person name="Sakano H."/>
            <person name="Wu T."/>
            <person name="Yu G."/>
            <person name="Miranda M."/>
            <person name="Quach H.L."/>
            <person name="Tripp M."/>
            <person name="Chang C.H."/>
            <person name="Lee J.M."/>
            <person name="Toriumi M.J."/>
            <person name="Chan M.M."/>
            <person name="Tang C.C."/>
            <person name="Onodera C.S."/>
            <person name="Deng J.M."/>
            <person name="Akiyama K."/>
            <person name="Ansari Y."/>
            <person name="Arakawa T."/>
            <person name="Banh J."/>
            <person name="Banno F."/>
            <person name="Bowser L."/>
            <person name="Brooks S.Y."/>
            <person name="Carninci P."/>
            <person name="Chao Q."/>
            <person name="Choy N."/>
            <person name="Enju A."/>
            <person name="Goldsmith A.D."/>
            <person name="Gurjal M."/>
            <person name="Hansen N.F."/>
            <person name="Hayashizaki Y."/>
            <person name="Johnson-Hopson C."/>
            <person name="Hsuan V.W."/>
            <person name="Iida K."/>
            <person name="Karnes M."/>
            <person name="Khan S."/>
            <person name="Koesema E."/>
            <person name="Ishida J."/>
            <person name="Jiang P.X."/>
            <person name="Jones T."/>
            <person name="Kawai J."/>
            <person name="Kamiya A."/>
            <person name="Meyers C."/>
            <person name="Nakajima M."/>
            <person name="Narusaka M."/>
            <person name="Seki M."/>
            <person name="Sakurai T."/>
            <person name="Satou M."/>
            <person name="Tamse R."/>
            <person name="Vaysberg M."/>
            <person name="Wallender E.K."/>
            <person name="Wong C."/>
            <person name="Yamamura Y."/>
            <person name="Yuan S."/>
            <person name="Shinozaki K."/>
            <person name="Davis R.W."/>
            <person name="Theologis A."/>
            <person name="Ecker J.R."/>
        </authorList>
    </citation>
    <scope>NUCLEOTIDE SEQUENCE [LARGE SCALE MRNA]</scope>
    <source>
        <strain>cv. Columbia</strain>
    </source>
</reference>
<reference key="5">
    <citation type="journal article" date="2005" name="Proc. Natl. Acad. Sci. U.S.A.">
        <title>The Arabidopsis SUMO E3 ligase SIZ1 controls phosphate deficiency responses.</title>
        <authorList>
            <person name="Miura K."/>
            <person name="Rus A."/>
            <person name="Sharkhuu A."/>
            <person name="Yokoi S."/>
            <person name="Karthikeyan A.S."/>
            <person name="Raghothama K.G."/>
            <person name="Baek D."/>
            <person name="Koo Y.D."/>
            <person name="Jin J.B."/>
            <person name="Bressan R.A."/>
            <person name="Yun D.-J."/>
            <person name="Hasegawa P.M."/>
        </authorList>
    </citation>
    <scope>SUMOYLATION</scope>
</reference>
<reference key="6">
    <citation type="journal article" date="2007" name="Nat. Genet.">
        <title>Target mimicry provides a new mechanism for regulation of microRNA activity.</title>
        <authorList>
            <person name="Franco-Zorrilla J.M."/>
            <person name="Valli A."/>
            <person name="Todesco M."/>
            <person name="Mateos I."/>
            <person name="Puga M.I."/>
            <person name="Rubio-Somoza I."/>
            <person name="Leyva A."/>
            <person name="Weigel D."/>
            <person name="Garcia J.A."/>
            <person name="Paz-Ares J."/>
        </authorList>
    </citation>
    <scope>FUNCTION</scope>
</reference>
<reference key="7">
    <citation type="journal article" date="2007" name="Plant Cell Environ.">
        <title>Increased expression of the MYB-related transcription factor, PHR1, leads to enhanced phosphate uptake in Arabidopsis thaliana.</title>
        <authorList>
            <person name="Nilsson L."/>
            <person name="Mueller R."/>
            <person name="Nielsen T.H."/>
        </authorList>
    </citation>
    <scope>FUNCTION</scope>
    <scope>DISRUPTION PHENOTYPE</scope>
</reference>
<reference key="8">
    <citation type="journal article" date="2009" name="J. Proteomics">
        <title>Phosphoproteomic analysis of nuclei-enriched fractions from Arabidopsis thaliana.</title>
        <authorList>
            <person name="Jones A.M.E."/>
            <person name="MacLean D."/>
            <person name="Studholme D.J."/>
            <person name="Serna-Sanz A."/>
            <person name="Andreasson E."/>
            <person name="Rathjen J.P."/>
            <person name="Peck S.C."/>
        </authorList>
    </citation>
    <scope>IDENTIFICATION BY MASS SPECTROMETRY [LARGE SCALE ANALYSIS]</scope>
    <source>
        <strain>cv. Columbia</strain>
    </source>
</reference>
<reference key="9">
    <citation type="journal article" date="2009" name="Plant Physiol.">
        <title>Large-scale Arabidopsis phosphoproteome profiling reveals novel chloroplast kinase substrates and phosphorylation networks.</title>
        <authorList>
            <person name="Reiland S."/>
            <person name="Messerli G."/>
            <person name="Baerenfaller K."/>
            <person name="Gerrits B."/>
            <person name="Endler A."/>
            <person name="Grossmann J."/>
            <person name="Gruissem W."/>
            <person name="Baginsky S."/>
        </authorList>
    </citation>
    <scope>PHOSPHORYLATION [LARGE SCALE ANALYSIS] AT SER-399</scope>
    <scope>IDENTIFICATION BY MASS SPECTROMETRY [LARGE SCALE ANALYSIS]</scope>
</reference>
<reference key="10">
    <citation type="journal article" date="2010" name="PLoS Genet.">
        <title>A central regulatory system largely controls transcriptional activation and repression responses to phosphate starvation in Arabidopsis.</title>
        <authorList>
            <person name="Bustos R."/>
            <person name="Castrillo G."/>
            <person name="Linhares F."/>
            <person name="Puga M.I."/>
            <person name="Rubio V."/>
            <person name="Perez-Perez J."/>
            <person name="Solano R."/>
            <person name="Leyva A."/>
            <person name="Paz-Ares J."/>
        </authorList>
    </citation>
    <scope>FUNCTION</scope>
    <scope>SUBUNIT</scope>
</reference>
<reference key="11">
    <citation type="journal article" date="2011" name="BMC Plant Biol.">
        <title>The transcription factor PHR1 plays a key role in the regulation of sulfate shoot-to-root flux upon phosphate starvation in Arabidopsis.</title>
        <authorList>
            <person name="Rouached H."/>
            <person name="Secco D."/>
            <person name="Arpat B."/>
            <person name="Poirier Y."/>
        </authorList>
    </citation>
    <scope>FUNCTION</scope>
</reference>
<reference key="12">
    <citation type="journal article" date="2012" name="Physiol. Plantarum">
        <title>The Arabidopsis transcription factor PHR1 is essential for adaptation to high light and retaining functional photosynthesis during phosphate starvation.</title>
        <authorList>
            <person name="Nilsson L."/>
            <person name="Lundmark M."/>
            <person name="Jensen P.E."/>
            <person name="Nielsen T.H."/>
        </authorList>
    </citation>
    <scope>FUNCTION</scope>
</reference>
<reference key="13">
    <citation type="journal article" date="2013" name="J. Biol. Chem.">
        <title>Arabidopsis ferritin 1 (AtFer1) gene regulation by the phosphate starvation response 1 (AtPHR1) transcription factor reveals a direct molecular link between iron and phosphate homeostasis.</title>
        <authorList>
            <person name="Bournier M."/>
            <person name="Tissot N."/>
            <person name="Mari S."/>
            <person name="Boucherez J."/>
            <person name="Lacombe E."/>
            <person name="Briat J.F."/>
            <person name="Gaymard F."/>
        </authorList>
    </citation>
    <scope>FUNCTION</scope>
</reference>
<reference key="14">
    <citation type="journal article" date="2014" name="J. Exp. Bot.">
        <title>Coordination between zinc and phosphate homeostasis involves the transcription factor PHR1, the phosphate exporter PHO1, and its homologue PHO1;H3 in Arabidopsis.</title>
        <authorList>
            <person name="Khan G.A."/>
            <person name="Bouraine S."/>
            <person name="Wege S."/>
            <person name="Li Y."/>
            <person name="de Carbonnel M."/>
            <person name="Berthomieu P."/>
            <person name="Poirier Y."/>
            <person name="Rouached H."/>
        </authorList>
    </citation>
    <scope>FUNCTION</scope>
</reference>
<reference key="15">
    <citation type="journal article" date="2014" name="Plant Physiol.">
        <title>A Shoot-specific hypoxic response of Arabidopsis sheds light on the role of the phosphate-responsive transcription factor PHOSPHATE STARVATION RESPONSE1.</title>
        <authorList>
            <person name="Klecker M."/>
            <person name="Gasch P."/>
            <person name="Peisker H."/>
            <person name="Doermann P."/>
            <person name="Schlicke H."/>
            <person name="Grimm B."/>
            <person name="Mustroph A."/>
        </authorList>
    </citation>
    <scope>FUNCTION</scope>
</reference>
<reference key="16">
    <citation type="journal article" date="2014" name="Proc. Natl. Acad. Sci. U.S.A.">
        <title>SPX1 is a phosphate-dependent inhibitor of PHOSPHATE STARVATION RESPONSE 1 in Arabidopsis.</title>
        <authorList>
            <person name="Puga M.I."/>
            <person name="Mateos I."/>
            <person name="Charukesi R."/>
            <person name="Wang Z."/>
            <person name="Franco-Zorrilla J.M."/>
            <person name="de Lorenzo L."/>
            <person name="Irigoyen M.L."/>
            <person name="Masiero S."/>
            <person name="Bustos R."/>
            <person name="Rodriguez J."/>
            <person name="Leyva A."/>
            <person name="Rubio V."/>
            <person name="Sommer H."/>
            <person name="Paz-Ares J."/>
        </authorList>
    </citation>
    <scope>FUNCTION</scope>
    <scope>INTERACTION WITH SPX1</scope>
</reference>
<reference key="17">
    <citation type="journal article" date="2015" name="J. Exp. Bot.">
        <title>The transcription factor PHR1 regulates lipid remodeling and triacylglycerol accumulation in Arabidopsis thaliana during phosphorus starvation.</title>
        <authorList>
            <person name="Pant B.D."/>
            <person name="Burgos A."/>
            <person name="Pant P."/>
            <person name="Cuadros-Inostroza A."/>
            <person name="Willmitzer L."/>
            <person name="Scheible W.R."/>
        </authorList>
    </citation>
    <scope>FUNCTION</scope>
</reference>
<reference key="18">
    <citation type="journal article" date="2016" name="Plant Physiol.">
        <title>Arabidopsis PHL2 and PHR1 act redundantly as the key components of the central regulatory system controlling transcriptional responses to phosphate starvation.</title>
        <authorList>
            <person name="Sun L."/>
            <person name="Song L."/>
            <person name="Zhang Y."/>
            <person name="Zheng Z."/>
            <person name="Liu D."/>
        </authorList>
    </citation>
    <scope>FUNCTION</scope>
    <scope>LACK OF INTERACTION WITH PHL2 AND PHL3</scope>
</reference>
<sequence length="409" mass="45546">MEARPVHRSGSRDLTRTSSIPSTQKPSPVEDSFMRSDNNSQLMSRPLGQTYHLLSSSNGGAVGHICSSSSSGFATNLHYSTMVSHEKQQHYTGSSSNNAVQTPSNNDSAWCHDSLPGGFLDFHETNPAIQNNCQIEDGGIAAAFDDIQKRSDWHEWADHLITDDDPLMSTNWNDLLLETNSNSDSKDQKTLQIPQPQIVQQQPSPSVELRPVSTTSSNSNNGTGKARMRWTPELHEAFVEAVNSLGGSERATPKGVLKIMKVEGLTIYHVKSHLQKYRTARYRPEPSETGSPERKLTPLEHITSLDLKGGIGITEALRLQMEVQKQLHEQLEIQRNLQLRIEEQGKYLQMMFEKQNSGLTKGTASTSDSAAKSEQEDKKTADSKEVPEEETRKCEELESPQPKRPKIDN</sequence>
<evidence type="ECO:0000255" key="1"/>
<evidence type="ECO:0000255" key="2">
    <source>
        <dbReference type="PROSITE-ProRule" id="PRU00625"/>
    </source>
</evidence>
<evidence type="ECO:0000256" key="3">
    <source>
        <dbReference type="SAM" id="MobiDB-lite"/>
    </source>
</evidence>
<evidence type="ECO:0000269" key="4">
    <source>
    </source>
</evidence>
<evidence type="ECO:0000269" key="5">
    <source>
    </source>
</evidence>
<evidence type="ECO:0000269" key="6">
    <source>
    </source>
</evidence>
<evidence type="ECO:0000269" key="7">
    <source>
    </source>
</evidence>
<evidence type="ECO:0000269" key="8">
    <source>
    </source>
</evidence>
<evidence type="ECO:0000269" key="9">
    <source>
    </source>
</evidence>
<evidence type="ECO:0000269" key="10">
    <source>
    </source>
</evidence>
<evidence type="ECO:0000269" key="11">
    <source>
    </source>
</evidence>
<evidence type="ECO:0000269" key="12">
    <source>
    </source>
</evidence>
<evidence type="ECO:0000269" key="13">
    <source>
    </source>
</evidence>
<evidence type="ECO:0000269" key="14">
    <source>
    </source>
</evidence>
<evidence type="ECO:0000269" key="15">
    <source>
    </source>
</evidence>
<evidence type="ECO:0000269" key="16">
    <source>
    </source>
</evidence>
<evidence type="ECO:0000303" key="17">
    <source>
    </source>
</evidence>
<evidence type="ECO:0000305" key="18"/>
<evidence type="ECO:0000312" key="19">
    <source>
        <dbReference type="Araport" id="AT4G28610"/>
    </source>
</evidence>
<evidence type="ECO:0000312" key="20">
    <source>
        <dbReference type="EMBL" id="CAB81449.1"/>
    </source>
</evidence>
<evidence type="ECO:0007744" key="21">
    <source>
    </source>
</evidence>
<evidence type="ECO:0007829" key="22">
    <source>
        <dbReference type="PDB" id="6J4K"/>
    </source>
</evidence>
<protein>
    <recommendedName>
        <fullName evidence="17">Protein PHOSPHATE STARVATION RESPONSE 1</fullName>
        <shortName evidence="17">AtPHR1</shortName>
    </recommendedName>
</protein>